<proteinExistence type="inferred from homology"/>
<gene>
    <name evidence="1" type="primary">dinB</name>
    <name type="ordered locus">Shew_2871</name>
</gene>
<dbReference type="EC" id="2.7.7.7" evidence="1"/>
<dbReference type="EMBL" id="CP000606">
    <property type="protein sequence ID" value="ABO24737.1"/>
    <property type="molecule type" value="Genomic_DNA"/>
</dbReference>
<dbReference type="RefSeq" id="WP_011866668.1">
    <property type="nucleotide sequence ID" value="NC_009092.1"/>
</dbReference>
<dbReference type="SMR" id="A3QGY9"/>
<dbReference type="STRING" id="323850.Shew_2871"/>
<dbReference type="KEGG" id="slo:Shew_2871"/>
<dbReference type="eggNOG" id="COG0389">
    <property type="taxonomic scope" value="Bacteria"/>
</dbReference>
<dbReference type="HOGENOM" id="CLU_012348_1_2_6"/>
<dbReference type="OrthoDB" id="9808813at2"/>
<dbReference type="Proteomes" id="UP000001558">
    <property type="component" value="Chromosome"/>
</dbReference>
<dbReference type="GO" id="GO:0005829">
    <property type="term" value="C:cytosol"/>
    <property type="evidence" value="ECO:0007669"/>
    <property type="project" value="TreeGrafter"/>
</dbReference>
<dbReference type="GO" id="GO:0003684">
    <property type="term" value="F:damaged DNA binding"/>
    <property type="evidence" value="ECO:0007669"/>
    <property type="project" value="InterPro"/>
</dbReference>
<dbReference type="GO" id="GO:0003887">
    <property type="term" value="F:DNA-directed DNA polymerase activity"/>
    <property type="evidence" value="ECO:0007669"/>
    <property type="project" value="UniProtKB-UniRule"/>
</dbReference>
<dbReference type="GO" id="GO:0000287">
    <property type="term" value="F:magnesium ion binding"/>
    <property type="evidence" value="ECO:0007669"/>
    <property type="project" value="UniProtKB-UniRule"/>
</dbReference>
<dbReference type="GO" id="GO:0006261">
    <property type="term" value="P:DNA-templated DNA replication"/>
    <property type="evidence" value="ECO:0007669"/>
    <property type="project" value="UniProtKB-UniRule"/>
</dbReference>
<dbReference type="GO" id="GO:0042276">
    <property type="term" value="P:error-prone translesion synthesis"/>
    <property type="evidence" value="ECO:0007669"/>
    <property type="project" value="TreeGrafter"/>
</dbReference>
<dbReference type="GO" id="GO:0009432">
    <property type="term" value="P:SOS response"/>
    <property type="evidence" value="ECO:0007669"/>
    <property type="project" value="TreeGrafter"/>
</dbReference>
<dbReference type="CDD" id="cd03586">
    <property type="entry name" value="PolY_Pol_IV_kappa"/>
    <property type="match status" value="1"/>
</dbReference>
<dbReference type="FunFam" id="1.10.150.20:FF:000019">
    <property type="entry name" value="DNA polymerase IV"/>
    <property type="match status" value="1"/>
</dbReference>
<dbReference type="FunFam" id="3.30.70.270:FF:000002">
    <property type="entry name" value="DNA polymerase IV"/>
    <property type="match status" value="1"/>
</dbReference>
<dbReference type="FunFam" id="3.40.1170.60:FF:000001">
    <property type="entry name" value="DNA polymerase IV"/>
    <property type="match status" value="1"/>
</dbReference>
<dbReference type="Gene3D" id="3.30.70.270">
    <property type="match status" value="1"/>
</dbReference>
<dbReference type="Gene3D" id="3.40.1170.60">
    <property type="match status" value="1"/>
</dbReference>
<dbReference type="Gene3D" id="1.10.150.20">
    <property type="entry name" value="5' to 3' exonuclease, C-terminal subdomain"/>
    <property type="match status" value="1"/>
</dbReference>
<dbReference type="Gene3D" id="3.30.1490.100">
    <property type="entry name" value="DNA polymerase, Y-family, little finger domain"/>
    <property type="match status" value="1"/>
</dbReference>
<dbReference type="HAMAP" id="MF_01113">
    <property type="entry name" value="DNApol_IV"/>
    <property type="match status" value="1"/>
</dbReference>
<dbReference type="InterPro" id="IPR043502">
    <property type="entry name" value="DNA/RNA_pol_sf"/>
</dbReference>
<dbReference type="InterPro" id="IPR036775">
    <property type="entry name" value="DNA_pol_Y-fam_lit_finger_sf"/>
</dbReference>
<dbReference type="InterPro" id="IPR017961">
    <property type="entry name" value="DNA_pol_Y-fam_little_finger"/>
</dbReference>
<dbReference type="InterPro" id="IPR050116">
    <property type="entry name" value="DNA_polymerase-Y"/>
</dbReference>
<dbReference type="InterPro" id="IPR022880">
    <property type="entry name" value="DNApol_IV"/>
</dbReference>
<dbReference type="InterPro" id="IPR053848">
    <property type="entry name" value="IMS_HHH_1"/>
</dbReference>
<dbReference type="InterPro" id="IPR043128">
    <property type="entry name" value="Rev_trsase/Diguanyl_cyclase"/>
</dbReference>
<dbReference type="InterPro" id="IPR001126">
    <property type="entry name" value="UmuC"/>
</dbReference>
<dbReference type="NCBIfam" id="NF002677">
    <property type="entry name" value="PRK02406.1"/>
    <property type="match status" value="1"/>
</dbReference>
<dbReference type="PANTHER" id="PTHR11076:SF33">
    <property type="entry name" value="DNA POLYMERASE KAPPA"/>
    <property type="match status" value="1"/>
</dbReference>
<dbReference type="PANTHER" id="PTHR11076">
    <property type="entry name" value="DNA REPAIR POLYMERASE UMUC / TRANSFERASE FAMILY MEMBER"/>
    <property type="match status" value="1"/>
</dbReference>
<dbReference type="Pfam" id="PF00817">
    <property type="entry name" value="IMS"/>
    <property type="match status" value="1"/>
</dbReference>
<dbReference type="Pfam" id="PF11799">
    <property type="entry name" value="IMS_C"/>
    <property type="match status" value="1"/>
</dbReference>
<dbReference type="Pfam" id="PF21999">
    <property type="entry name" value="IMS_HHH_1"/>
    <property type="match status" value="1"/>
</dbReference>
<dbReference type="SUPFAM" id="SSF56672">
    <property type="entry name" value="DNA/RNA polymerases"/>
    <property type="match status" value="1"/>
</dbReference>
<dbReference type="SUPFAM" id="SSF100879">
    <property type="entry name" value="Lesion bypass DNA polymerase (Y-family), little finger domain"/>
    <property type="match status" value="1"/>
</dbReference>
<dbReference type="PROSITE" id="PS50173">
    <property type="entry name" value="UMUC"/>
    <property type="match status" value="1"/>
</dbReference>
<keyword id="KW-0963">Cytoplasm</keyword>
<keyword id="KW-0227">DNA damage</keyword>
<keyword id="KW-0234">DNA repair</keyword>
<keyword id="KW-0235">DNA replication</keyword>
<keyword id="KW-0238">DNA-binding</keyword>
<keyword id="KW-0239">DNA-directed DNA polymerase</keyword>
<keyword id="KW-0460">Magnesium</keyword>
<keyword id="KW-0479">Metal-binding</keyword>
<keyword id="KW-0515">Mutator protein</keyword>
<keyword id="KW-0548">Nucleotidyltransferase</keyword>
<keyword id="KW-1185">Reference proteome</keyword>
<keyword id="KW-0808">Transferase</keyword>
<feature type="chain" id="PRO_1000084932" description="DNA polymerase IV">
    <location>
        <begin position="1"/>
        <end position="359"/>
    </location>
</feature>
<feature type="domain" description="UmuC" evidence="1">
    <location>
        <begin position="4"/>
        <end position="185"/>
    </location>
</feature>
<feature type="active site" evidence="1">
    <location>
        <position position="104"/>
    </location>
</feature>
<feature type="binding site" evidence="1">
    <location>
        <position position="8"/>
    </location>
    <ligand>
        <name>Mg(2+)</name>
        <dbReference type="ChEBI" id="CHEBI:18420"/>
    </ligand>
</feature>
<feature type="binding site" evidence="1">
    <location>
        <position position="103"/>
    </location>
    <ligand>
        <name>Mg(2+)</name>
        <dbReference type="ChEBI" id="CHEBI:18420"/>
    </ligand>
</feature>
<feature type="site" description="Substrate discrimination" evidence="1">
    <location>
        <position position="13"/>
    </location>
</feature>
<protein>
    <recommendedName>
        <fullName evidence="1">DNA polymerase IV</fullName>
        <shortName evidence="1">Pol IV</shortName>
        <ecNumber evidence="1">2.7.7.7</ecNumber>
    </recommendedName>
</protein>
<evidence type="ECO:0000255" key="1">
    <source>
        <dbReference type="HAMAP-Rule" id="MF_01113"/>
    </source>
</evidence>
<accession>A3QGY9</accession>
<name>DPO4_SHELP</name>
<comment type="function">
    <text evidence="1">Poorly processive, error-prone DNA polymerase involved in untargeted mutagenesis. Copies undamaged DNA at stalled replication forks, which arise in vivo from mismatched or misaligned primer ends. These misaligned primers can be extended by PolIV. Exhibits no 3'-5' exonuclease (proofreading) activity. May be involved in translesional synthesis, in conjunction with the beta clamp from PolIII.</text>
</comment>
<comment type="catalytic activity">
    <reaction evidence="1">
        <text>DNA(n) + a 2'-deoxyribonucleoside 5'-triphosphate = DNA(n+1) + diphosphate</text>
        <dbReference type="Rhea" id="RHEA:22508"/>
        <dbReference type="Rhea" id="RHEA-COMP:17339"/>
        <dbReference type="Rhea" id="RHEA-COMP:17340"/>
        <dbReference type="ChEBI" id="CHEBI:33019"/>
        <dbReference type="ChEBI" id="CHEBI:61560"/>
        <dbReference type="ChEBI" id="CHEBI:173112"/>
        <dbReference type="EC" id="2.7.7.7"/>
    </reaction>
</comment>
<comment type="cofactor">
    <cofactor evidence="1">
        <name>Mg(2+)</name>
        <dbReference type="ChEBI" id="CHEBI:18420"/>
    </cofactor>
    <text evidence="1">Binds 2 magnesium ions per subunit.</text>
</comment>
<comment type="subunit">
    <text evidence="1">Monomer.</text>
</comment>
<comment type="subcellular location">
    <subcellularLocation>
        <location evidence="1">Cytoplasm</location>
    </subcellularLocation>
</comment>
<comment type="similarity">
    <text evidence="1">Belongs to the DNA polymerase type-Y family.</text>
</comment>
<sequence length="359" mass="39681">MKKIIHVDMDCFFAAVEMRDFPELRGKPIAVGGRSDRRGVISTCNYEARKFGVRSAMASAYALKLCPDLILVPGRMSVYKEVSAQIREVFARYTELIEPLSLDEAYLDVSDCTQHQGSATLIAEAIRREIFEVTGLTASAGIAPVKFLAKIASDLNKPNGQYVITPQMIPEFVKTLALIKIPGVGKVTAAKLETMGLITCADVQACSRQSLMERFGKFGGVLYDRAQGIDPRGISPHRERKSVGVETTLAKDIYTYEQCQAVMPQLIQELSGRISRSAKSRRIHKQVVKLKFDDFKQTTIEQRSDEVSVKLFYDLLKQALERRAGRGIRLLGVSVGLESEAVGAGLDEEVHGAQMDLGF</sequence>
<organism>
    <name type="scientific">Shewanella loihica (strain ATCC BAA-1088 / PV-4)</name>
    <dbReference type="NCBI Taxonomy" id="323850"/>
    <lineage>
        <taxon>Bacteria</taxon>
        <taxon>Pseudomonadati</taxon>
        <taxon>Pseudomonadota</taxon>
        <taxon>Gammaproteobacteria</taxon>
        <taxon>Alteromonadales</taxon>
        <taxon>Shewanellaceae</taxon>
        <taxon>Shewanella</taxon>
    </lineage>
</organism>
<reference key="1">
    <citation type="submission" date="2007-03" db="EMBL/GenBank/DDBJ databases">
        <title>Complete sequence of Shewanella loihica PV-4.</title>
        <authorList>
            <consortium name="US DOE Joint Genome Institute"/>
            <person name="Copeland A."/>
            <person name="Lucas S."/>
            <person name="Lapidus A."/>
            <person name="Barry K."/>
            <person name="Detter J.C."/>
            <person name="Glavina del Rio T."/>
            <person name="Hammon N."/>
            <person name="Israni S."/>
            <person name="Dalin E."/>
            <person name="Tice H."/>
            <person name="Pitluck S."/>
            <person name="Chain P."/>
            <person name="Malfatti S."/>
            <person name="Shin M."/>
            <person name="Vergez L."/>
            <person name="Schmutz J."/>
            <person name="Larimer F."/>
            <person name="Land M."/>
            <person name="Hauser L."/>
            <person name="Kyrpides N."/>
            <person name="Mikhailova N."/>
            <person name="Romine M.F."/>
            <person name="Serres G."/>
            <person name="Fredrickson J."/>
            <person name="Tiedje J."/>
            <person name="Richardson P."/>
        </authorList>
    </citation>
    <scope>NUCLEOTIDE SEQUENCE [LARGE SCALE GENOMIC DNA]</scope>
    <source>
        <strain>ATCC BAA-1088 / PV-4</strain>
    </source>
</reference>